<organism>
    <name type="scientific">Gallus gallus</name>
    <name type="common">Chicken</name>
    <dbReference type="NCBI Taxonomy" id="9031"/>
    <lineage>
        <taxon>Eukaryota</taxon>
        <taxon>Metazoa</taxon>
        <taxon>Chordata</taxon>
        <taxon>Craniata</taxon>
        <taxon>Vertebrata</taxon>
        <taxon>Euteleostomi</taxon>
        <taxon>Archelosauria</taxon>
        <taxon>Archosauria</taxon>
        <taxon>Dinosauria</taxon>
        <taxon>Saurischia</taxon>
        <taxon>Theropoda</taxon>
        <taxon>Coelurosauria</taxon>
        <taxon>Aves</taxon>
        <taxon>Neognathae</taxon>
        <taxon>Galloanserae</taxon>
        <taxon>Galliformes</taxon>
        <taxon>Phasianidae</taxon>
        <taxon>Phasianinae</taxon>
        <taxon>Gallus</taxon>
    </lineage>
</organism>
<proteinExistence type="evidence at transcript level"/>
<feature type="chain" id="PRO_0000197144" description="Mesoderm induction early response protein 1">
    <location>
        <begin position="1"/>
        <end position="513"/>
    </location>
</feature>
<feature type="domain" description="ELM2" evidence="2">
    <location>
        <begin position="182"/>
        <end position="280"/>
    </location>
</feature>
<feature type="domain" description="SANT" evidence="3">
    <location>
        <begin position="285"/>
        <end position="337"/>
    </location>
</feature>
<feature type="region of interest" description="Disordered" evidence="4">
    <location>
        <begin position="1"/>
        <end position="174"/>
    </location>
</feature>
<feature type="region of interest" description="Interaction with HDAC1" evidence="1">
    <location>
        <begin position="157"/>
        <end position="261"/>
    </location>
</feature>
<feature type="region of interest" description="Disordered" evidence="4">
    <location>
        <begin position="368"/>
        <end position="513"/>
    </location>
</feature>
<feature type="compositionally biased region" description="Low complexity" evidence="4">
    <location>
        <begin position="1"/>
        <end position="16"/>
    </location>
</feature>
<feature type="compositionally biased region" description="Basic and acidic residues" evidence="4">
    <location>
        <begin position="17"/>
        <end position="36"/>
    </location>
</feature>
<feature type="compositionally biased region" description="Basic and acidic residues" evidence="4">
    <location>
        <begin position="46"/>
        <end position="63"/>
    </location>
</feature>
<feature type="compositionally biased region" description="Acidic residues" evidence="4">
    <location>
        <begin position="82"/>
        <end position="107"/>
    </location>
</feature>
<feature type="compositionally biased region" description="Polar residues" evidence="4">
    <location>
        <begin position="131"/>
        <end position="146"/>
    </location>
</feature>
<feature type="compositionally biased region" description="Acidic residues" evidence="4">
    <location>
        <begin position="162"/>
        <end position="174"/>
    </location>
</feature>
<feature type="compositionally biased region" description="Basic and acidic residues" evidence="4">
    <location>
        <begin position="416"/>
        <end position="425"/>
    </location>
</feature>
<feature type="compositionally biased region" description="Basic and acidic residues" evidence="4">
    <location>
        <begin position="463"/>
        <end position="476"/>
    </location>
</feature>
<feature type="compositionally biased region" description="Polar residues" evidence="4">
    <location>
        <begin position="483"/>
        <end position="500"/>
    </location>
</feature>
<reference key="1">
    <citation type="journal article" date="2005" name="Genome Biol.">
        <title>Full-length cDNAs from chicken bursal lymphocytes to facilitate gene function analysis.</title>
        <authorList>
            <person name="Caldwell R.B."/>
            <person name="Kierzek A.M."/>
            <person name="Arakawa H."/>
            <person name="Bezzubov Y."/>
            <person name="Zaim J."/>
            <person name="Fiedler P."/>
            <person name="Kutter S."/>
            <person name="Blagodatski A."/>
            <person name="Kostovska D."/>
            <person name="Koter M."/>
            <person name="Plachy J."/>
            <person name="Carninci P."/>
            <person name="Hayashizaki Y."/>
            <person name="Buerstedde J.-M."/>
        </authorList>
    </citation>
    <scope>NUCLEOTIDE SEQUENCE [LARGE SCALE MRNA]</scope>
    <source>
        <strain>CB</strain>
        <tissue>Bursa of Fabricius</tissue>
    </source>
</reference>
<sequence length="513" mass="58089">MAEPSVESSSPGGSATSDDHEFDPSADMLVHDFDDERTLEEEEMMEGERNFNSEIEDLNRESDMPIQELLSLYGYDGTIPLQEDDDDEDEEEEEEEGEDDDDVDNDDNSGCSGENKEETIKDSSGQEDDTQSSNDDPAPSVASQDPQELIRPRRCKYFDTNSEIEEESEEDEDYIPSEDWKKEIMVGSMFQAEIPAGICRYKENEKVYENDDQLLWNPDVLPEDKVIEFLNEASRRTGDEKGLDAIPEGSHIKDNEQALYELVKCNFDTEESLRRLRFNVKAAREELSVWTEEECRNFEQGLKVYGKDFHVIQANKVRTRSVGECVAFYYMWKKSERYDFFAQQTRFGKKKYNLHPGVTDYMDRLLDESESAASSRAPSPPPTASNSSTSQSEREDSTTSSSNQNGLSANGPGDIPSKDEAKPEGLHINGPTGGKKTPHTDLDTNGYETESLSLDPKVAHSTSRSENDFEEKNERPLKRRRINSNGKESPGSSEFFQEANSHGKLEELETLDD</sequence>
<protein>
    <recommendedName>
        <fullName>Mesoderm induction early response protein 1</fullName>
        <shortName>Mi-er1</shortName>
    </recommendedName>
</protein>
<dbReference type="EMBL" id="AJ719995">
    <property type="protein sequence ID" value="CAG31654.1"/>
    <property type="molecule type" value="mRNA"/>
</dbReference>
<dbReference type="RefSeq" id="NP_001026463.1">
    <property type="nucleotide sequence ID" value="NM_001031292.1"/>
</dbReference>
<dbReference type="FunCoup" id="Q5ZKT9">
    <property type="interactions" value="1094"/>
</dbReference>
<dbReference type="STRING" id="9031.ENSGALP00000043276"/>
<dbReference type="GlyGen" id="Q5ZKT9">
    <property type="glycosylation" value="1 site"/>
</dbReference>
<dbReference type="PaxDb" id="9031-ENSGALP00000043276"/>
<dbReference type="GeneID" id="424702"/>
<dbReference type="KEGG" id="gga:424702"/>
<dbReference type="CTD" id="57708"/>
<dbReference type="VEuPathDB" id="HostDB:geneid_424702"/>
<dbReference type="eggNOG" id="KOG4329">
    <property type="taxonomic scope" value="Eukaryota"/>
</dbReference>
<dbReference type="InParanoid" id="Q5ZKT9"/>
<dbReference type="OrthoDB" id="5916873at2759"/>
<dbReference type="PhylomeDB" id="Q5ZKT9"/>
<dbReference type="PRO" id="PR:Q5ZKT9"/>
<dbReference type="Proteomes" id="UP000000539">
    <property type="component" value="Unassembled WGS sequence"/>
</dbReference>
<dbReference type="GO" id="GO:0005654">
    <property type="term" value="C:nucleoplasm"/>
    <property type="evidence" value="ECO:0000318"/>
    <property type="project" value="GO_Central"/>
</dbReference>
<dbReference type="GO" id="GO:0017053">
    <property type="term" value="C:transcription repressor complex"/>
    <property type="evidence" value="ECO:0000250"/>
    <property type="project" value="UniProtKB"/>
</dbReference>
<dbReference type="GO" id="GO:0042826">
    <property type="term" value="F:histone deacetylase binding"/>
    <property type="evidence" value="ECO:0000318"/>
    <property type="project" value="GO_Central"/>
</dbReference>
<dbReference type="GO" id="GO:0003714">
    <property type="term" value="F:transcription corepressor activity"/>
    <property type="evidence" value="ECO:0000318"/>
    <property type="project" value="GO_Central"/>
</dbReference>
<dbReference type="GO" id="GO:0006338">
    <property type="term" value="P:chromatin remodeling"/>
    <property type="evidence" value="ECO:0000250"/>
    <property type="project" value="UniProtKB"/>
</dbReference>
<dbReference type="GO" id="GO:0000122">
    <property type="term" value="P:negative regulation of transcription by RNA polymerase II"/>
    <property type="evidence" value="ECO:0000318"/>
    <property type="project" value="GO_Central"/>
</dbReference>
<dbReference type="GO" id="GO:0006355">
    <property type="term" value="P:regulation of DNA-templated transcription"/>
    <property type="evidence" value="ECO:0000250"/>
    <property type="project" value="UniProtKB"/>
</dbReference>
<dbReference type="CDD" id="cd11661">
    <property type="entry name" value="SANT_MTA3_like"/>
    <property type="match status" value="1"/>
</dbReference>
<dbReference type="FunFam" id="1.10.10.60:FF:000025">
    <property type="entry name" value="Mesoderm induction early response 1, transcriptional regulator"/>
    <property type="match status" value="1"/>
</dbReference>
<dbReference type="Gene3D" id="1.10.10.60">
    <property type="entry name" value="Homeodomain-like"/>
    <property type="match status" value="1"/>
</dbReference>
<dbReference type="InterPro" id="IPR000949">
    <property type="entry name" value="ELM2_dom"/>
</dbReference>
<dbReference type="InterPro" id="IPR009057">
    <property type="entry name" value="Homeodomain-like_sf"/>
</dbReference>
<dbReference type="InterPro" id="IPR040138">
    <property type="entry name" value="MIER/MTA"/>
</dbReference>
<dbReference type="InterPro" id="IPR045787">
    <property type="entry name" value="MIER1/3_C"/>
</dbReference>
<dbReference type="InterPro" id="IPR001005">
    <property type="entry name" value="SANT/Myb"/>
</dbReference>
<dbReference type="InterPro" id="IPR017884">
    <property type="entry name" value="SANT_dom"/>
</dbReference>
<dbReference type="PANTHER" id="PTHR10865:SF24">
    <property type="entry name" value="MESODERM INDUCTION EARLY RESPONSE PROTEIN 1"/>
    <property type="match status" value="1"/>
</dbReference>
<dbReference type="PANTHER" id="PTHR10865">
    <property type="entry name" value="METASTASIS-ASSOCIATED PROTEIN AND MESODERM INDUCTION EARLY RESPONSE PROTEIN"/>
    <property type="match status" value="1"/>
</dbReference>
<dbReference type="Pfam" id="PF01448">
    <property type="entry name" value="ELM2"/>
    <property type="match status" value="1"/>
</dbReference>
<dbReference type="Pfam" id="PF19426">
    <property type="entry name" value="MIER1_3_C"/>
    <property type="match status" value="1"/>
</dbReference>
<dbReference type="Pfam" id="PF00249">
    <property type="entry name" value="Myb_DNA-binding"/>
    <property type="match status" value="1"/>
</dbReference>
<dbReference type="SMART" id="SM01189">
    <property type="entry name" value="ELM2"/>
    <property type="match status" value="1"/>
</dbReference>
<dbReference type="SMART" id="SM00717">
    <property type="entry name" value="SANT"/>
    <property type="match status" value="1"/>
</dbReference>
<dbReference type="SUPFAM" id="SSF46689">
    <property type="entry name" value="Homeodomain-like"/>
    <property type="match status" value="1"/>
</dbReference>
<dbReference type="PROSITE" id="PS51156">
    <property type="entry name" value="ELM2"/>
    <property type="match status" value="1"/>
</dbReference>
<dbReference type="PROSITE" id="PS51293">
    <property type="entry name" value="SANT"/>
    <property type="match status" value="1"/>
</dbReference>
<accession>Q5ZKT9</accession>
<name>MIER1_CHICK</name>
<comment type="function">
    <text evidence="1">Transcriptional repressor regulating the expression of a number of genes. Probably functions through recruitment of histone deacetylases involved in chromatin silencing (By similarity).</text>
</comment>
<comment type="subcellular location">
    <subcellularLocation>
        <location evidence="2 3">Nucleus</location>
    </subcellularLocation>
</comment>
<gene>
    <name type="primary">MIER1</name>
    <name type="ORF">RCJMB04_9c22</name>
</gene>
<keyword id="KW-0539">Nucleus</keyword>
<keyword id="KW-1185">Reference proteome</keyword>
<keyword id="KW-0678">Repressor</keyword>
<keyword id="KW-0804">Transcription</keyword>
<keyword id="KW-0805">Transcription regulation</keyword>
<evidence type="ECO:0000250" key="1"/>
<evidence type="ECO:0000255" key="2">
    <source>
        <dbReference type="PROSITE-ProRule" id="PRU00512"/>
    </source>
</evidence>
<evidence type="ECO:0000255" key="3">
    <source>
        <dbReference type="PROSITE-ProRule" id="PRU00624"/>
    </source>
</evidence>
<evidence type="ECO:0000256" key="4">
    <source>
        <dbReference type="SAM" id="MobiDB-lite"/>
    </source>
</evidence>